<name>YB255_YEAST</name>
<comment type="subcellular location">
    <subcellularLocation>
        <location evidence="2">Membrane</location>
        <topology evidence="2">Single-pass membrane protein</topology>
    </subcellularLocation>
</comment>
<proteinExistence type="predicted"/>
<organism>
    <name type="scientific">Saccharomyces cerevisiae (strain ATCC 204508 / S288c)</name>
    <name type="common">Baker's yeast</name>
    <dbReference type="NCBI Taxonomy" id="559292"/>
    <lineage>
        <taxon>Eukaryota</taxon>
        <taxon>Fungi</taxon>
        <taxon>Dikarya</taxon>
        <taxon>Ascomycota</taxon>
        <taxon>Saccharomycotina</taxon>
        <taxon>Saccharomycetes</taxon>
        <taxon>Saccharomycetales</taxon>
        <taxon>Saccharomycetaceae</taxon>
        <taxon>Saccharomyces</taxon>
    </lineage>
</organism>
<feature type="chain" id="PRO_0000248444" description="Uncharacterized protein YBR255C-A">
    <location>
        <begin position="1"/>
        <end position="120"/>
    </location>
</feature>
<feature type="transmembrane region" description="Helical" evidence="1">
    <location>
        <begin position="22"/>
        <end position="44"/>
    </location>
</feature>
<feature type="glycosylation site" description="N-linked (GlcNAc...) asparagine" evidence="1">
    <location>
        <position position="114"/>
    </location>
</feature>
<sequence>MGGNVLPIHYDPKTVKQLTKEITVASCIGAAQGALFSIASALLLRRFSSVYRNVRTQVRVFYHCSWISMGAVFRADKQLLKFQTNYYREEQKRREKIMDEAAERGLFLEDESLNSSRSTT</sequence>
<protein>
    <recommendedName>
        <fullName>Uncharacterized protein YBR255C-A</fullName>
    </recommendedName>
</protein>
<keyword id="KW-0325">Glycoprotein</keyword>
<keyword id="KW-0472">Membrane</keyword>
<keyword id="KW-1185">Reference proteome</keyword>
<keyword id="KW-0812">Transmembrane</keyword>
<keyword id="KW-1133">Transmembrane helix</keyword>
<evidence type="ECO:0000255" key="1"/>
<evidence type="ECO:0000305" key="2"/>
<reference key="1">
    <citation type="journal article" date="1993" name="Yeast">
        <title>The complete sequence of a 19,482 bp segment located on the right arm of chromosome II from Saccharomyces cerevisiae.</title>
        <authorList>
            <person name="Doignon F."/>
            <person name="Biteau N."/>
            <person name="Crouzet M."/>
            <person name="Aigle M."/>
        </authorList>
    </citation>
    <scope>NUCLEOTIDE SEQUENCE [GENOMIC DNA]</scope>
    <source>
        <strain>ATCC 204508 / S288c</strain>
    </source>
</reference>
<reference key="2">
    <citation type="journal article" date="1994" name="EMBO J.">
        <title>Complete DNA sequence of yeast chromosome II.</title>
        <authorList>
            <person name="Feldmann H."/>
            <person name="Aigle M."/>
            <person name="Aljinovic G."/>
            <person name="Andre B."/>
            <person name="Baclet M.C."/>
            <person name="Barthe C."/>
            <person name="Baur A."/>
            <person name="Becam A.-M."/>
            <person name="Biteau N."/>
            <person name="Boles E."/>
            <person name="Brandt T."/>
            <person name="Brendel M."/>
            <person name="Brueckner M."/>
            <person name="Bussereau F."/>
            <person name="Christiansen C."/>
            <person name="Contreras R."/>
            <person name="Crouzet M."/>
            <person name="Cziepluch C."/>
            <person name="Demolis N."/>
            <person name="Delaveau T."/>
            <person name="Doignon F."/>
            <person name="Domdey H."/>
            <person name="Duesterhus S."/>
            <person name="Dubois E."/>
            <person name="Dujon B."/>
            <person name="El Bakkoury M."/>
            <person name="Entian K.-D."/>
            <person name="Feuermann M."/>
            <person name="Fiers W."/>
            <person name="Fobo G.M."/>
            <person name="Fritz C."/>
            <person name="Gassenhuber J."/>
            <person name="Glansdorff N."/>
            <person name="Goffeau A."/>
            <person name="Grivell L.A."/>
            <person name="de Haan M."/>
            <person name="Hein C."/>
            <person name="Herbert C.J."/>
            <person name="Hollenberg C.P."/>
            <person name="Holmstroem K."/>
            <person name="Jacq C."/>
            <person name="Jacquet M."/>
            <person name="Jauniaux J.-C."/>
            <person name="Jonniaux J.-L."/>
            <person name="Kallesoee T."/>
            <person name="Kiesau P."/>
            <person name="Kirchrath L."/>
            <person name="Koetter P."/>
            <person name="Korol S."/>
            <person name="Liebl S."/>
            <person name="Logghe M."/>
            <person name="Lohan A.J.E."/>
            <person name="Louis E.J."/>
            <person name="Li Z.Y."/>
            <person name="Maat M.J."/>
            <person name="Mallet L."/>
            <person name="Mannhaupt G."/>
            <person name="Messenguy F."/>
            <person name="Miosga T."/>
            <person name="Molemans F."/>
            <person name="Mueller S."/>
            <person name="Nasr F."/>
            <person name="Obermaier B."/>
            <person name="Perea J."/>
            <person name="Pierard A."/>
            <person name="Piravandi E."/>
            <person name="Pohl F.M."/>
            <person name="Pohl T.M."/>
            <person name="Potier S."/>
            <person name="Proft M."/>
            <person name="Purnelle B."/>
            <person name="Ramezani Rad M."/>
            <person name="Rieger M."/>
            <person name="Rose M."/>
            <person name="Schaaff-Gerstenschlaeger I."/>
            <person name="Scherens B."/>
            <person name="Schwarzlose C."/>
            <person name="Skala J."/>
            <person name="Slonimski P.P."/>
            <person name="Smits P.H.M."/>
            <person name="Souciet J.-L."/>
            <person name="Steensma H.Y."/>
            <person name="Stucka R."/>
            <person name="Urrestarazu L.A."/>
            <person name="van der Aart Q.J.M."/>
            <person name="Van Dyck L."/>
            <person name="Vassarotti A."/>
            <person name="Vetter I."/>
            <person name="Vierendeels F."/>
            <person name="Vissers S."/>
            <person name="Wagner G."/>
            <person name="de Wergifosse P."/>
            <person name="Wolfe K.H."/>
            <person name="Zagulski M."/>
            <person name="Zimmermann F.K."/>
            <person name="Mewes H.-W."/>
            <person name="Kleine K."/>
        </authorList>
    </citation>
    <scope>NUCLEOTIDE SEQUENCE [LARGE SCALE GENOMIC DNA]</scope>
    <source>
        <strain>ATCC 204508 / S288c</strain>
    </source>
</reference>
<reference key="3">
    <citation type="journal article" date="2014" name="G3 (Bethesda)">
        <title>The reference genome sequence of Saccharomyces cerevisiae: Then and now.</title>
        <authorList>
            <person name="Engel S.R."/>
            <person name="Dietrich F.S."/>
            <person name="Fisk D.G."/>
            <person name="Binkley G."/>
            <person name="Balakrishnan R."/>
            <person name="Costanzo M.C."/>
            <person name="Dwight S.S."/>
            <person name="Hitz B.C."/>
            <person name="Karra K."/>
            <person name="Nash R.S."/>
            <person name="Weng S."/>
            <person name="Wong E.D."/>
            <person name="Lloyd P."/>
            <person name="Skrzypek M.S."/>
            <person name="Miyasato S.R."/>
            <person name="Simison M."/>
            <person name="Cherry J.M."/>
        </authorList>
    </citation>
    <scope>GENOME REANNOTATION</scope>
    <source>
        <strain>ATCC 204508 / S288c</strain>
    </source>
</reference>
<reference key="4">
    <citation type="journal article" date="2000" name="FEBS Lett.">
        <title>Genomic exploration of the hemiascomycetous yeasts: 4. The genome of Saccharomyces cerevisiae revisited.</title>
        <authorList>
            <person name="Blandin G."/>
            <person name="Durrens P."/>
            <person name="Tekaia F."/>
            <person name="Aigle M."/>
            <person name="Bolotin-Fukuhara M."/>
            <person name="Bon E."/>
            <person name="Casaregola S."/>
            <person name="de Montigny J."/>
            <person name="Gaillardin C."/>
            <person name="Lepingle A."/>
            <person name="Llorente B."/>
            <person name="Malpertuy A."/>
            <person name="Neuveglise C."/>
            <person name="Ozier-Kalogeropoulos O."/>
            <person name="Perrin A."/>
            <person name="Potier S."/>
            <person name="Souciet J.-L."/>
            <person name="Talla E."/>
            <person name="Toffano-Nioche C."/>
            <person name="Wesolowski-Louvel M."/>
            <person name="Marck C."/>
            <person name="Dujon B."/>
        </authorList>
    </citation>
    <scope>GENOME REANNOTATION</scope>
</reference>
<accession>Q3E776</accession>
<accession>D6VQQ2</accession>
<gene>
    <name type="ordered locus">YBR255C-A</name>
</gene>
<dbReference type="EMBL" id="X70529">
    <property type="status" value="NOT_ANNOTATED_CDS"/>
    <property type="molecule type" value="Genomic_DNA"/>
</dbReference>
<dbReference type="EMBL" id="Z36125">
    <property type="status" value="NOT_ANNOTATED_CDS"/>
    <property type="molecule type" value="Genomic_DNA"/>
</dbReference>
<dbReference type="EMBL" id="BK006936">
    <property type="protein sequence ID" value="DAA07372.1"/>
    <property type="molecule type" value="Genomic_DNA"/>
</dbReference>
<dbReference type="SMR" id="Q3E776"/>
<dbReference type="BioGRID" id="32951">
    <property type="interactions" value="57"/>
</dbReference>
<dbReference type="FunCoup" id="Q3E776">
    <property type="interactions" value="15"/>
</dbReference>
<dbReference type="IntAct" id="Q3E776">
    <property type="interactions" value="4"/>
</dbReference>
<dbReference type="MINT" id="Q3E776"/>
<dbReference type="STRING" id="4932.YBR255C-A"/>
<dbReference type="GlyGen" id="Q3E776">
    <property type="glycosylation" value="1 site"/>
</dbReference>
<dbReference type="PaxDb" id="4932-YBR255C-A"/>
<dbReference type="PeptideAtlas" id="Q3E776"/>
<dbReference type="EnsemblFungi" id="YBR255C-A_mRNA">
    <property type="protein sequence ID" value="YBR255C-A"/>
    <property type="gene ID" value="YBR255C-A"/>
</dbReference>
<dbReference type="KEGG" id="sce:YBR255C-A"/>
<dbReference type="AGR" id="SGD:S000007649"/>
<dbReference type="SGD" id="S000007649">
    <property type="gene designation" value="YBR255C-A"/>
</dbReference>
<dbReference type="VEuPathDB" id="FungiDB:YBR255C-A"/>
<dbReference type="eggNOG" id="ENOG502S16Z">
    <property type="taxonomic scope" value="Eukaryota"/>
</dbReference>
<dbReference type="HOGENOM" id="CLU_2038426_0_0_1"/>
<dbReference type="InParanoid" id="Q3E776"/>
<dbReference type="OMA" id="SWISMGA"/>
<dbReference type="OrthoDB" id="3979469at2759"/>
<dbReference type="BioCyc" id="YEAST:G3O-29254-MONOMER"/>
<dbReference type="BioGRID-ORCS" id="852558">
    <property type="hits" value="0 hits in 10 CRISPR screens"/>
</dbReference>
<dbReference type="PRO" id="PR:Q3E776"/>
<dbReference type="Proteomes" id="UP000002311">
    <property type="component" value="Chromosome II"/>
</dbReference>
<dbReference type="RNAct" id="Q3E776">
    <property type="molecule type" value="protein"/>
</dbReference>
<dbReference type="GO" id="GO:0016020">
    <property type="term" value="C:membrane"/>
    <property type="evidence" value="ECO:0007669"/>
    <property type="project" value="UniProtKB-SubCell"/>
</dbReference>
<dbReference type="InterPro" id="IPR038882">
    <property type="entry name" value="Rcf3"/>
</dbReference>
<dbReference type="PANTHER" id="PTHR39153">
    <property type="entry name" value="AGR244WP"/>
    <property type="match status" value="1"/>
</dbReference>
<dbReference type="PANTHER" id="PTHR39153:SF1">
    <property type="entry name" value="AGR244WP"/>
    <property type="match status" value="1"/>
</dbReference>